<reference key="1">
    <citation type="journal article" date="1996" name="Gene">
        <title>Cloning of a human cDNA encoding a protein with high homology to yeast methionyl-tRNA synthetase.</title>
        <authorList>
            <person name="Lage H."/>
            <person name="Dietel M."/>
        </authorList>
    </citation>
    <scope>NUCLEOTIDE SEQUENCE [MRNA] (ISOFORM 1)</scope>
    <source>
        <tissue>Gastric carcinoma</tissue>
    </source>
</reference>
<reference key="2">
    <citation type="submission" date="1996-02" db="EMBL/GenBank/DDBJ databases">
        <title>Cloning and sequence determination of a human cytoplasmic methionyl-tRNA synthetase gene.</title>
        <authorList>
            <person name="Motegi H."/>
            <person name="Noda T."/>
            <person name="Shiba K."/>
        </authorList>
    </citation>
    <scope>NUCLEOTIDE SEQUENCE [MRNA] (ISOFORM 1)</scope>
    <source>
        <tissue>Brain</tissue>
    </source>
</reference>
<reference key="3">
    <citation type="submission" date="2003-05" db="EMBL/GenBank/DDBJ databases">
        <title>Cloning of human full-length CDSs in BD Creator(TM) system donor vector.</title>
        <authorList>
            <person name="Kalnine N."/>
            <person name="Chen X."/>
            <person name="Rolfs A."/>
            <person name="Halleck A."/>
            <person name="Hines L."/>
            <person name="Eisenstein S."/>
            <person name="Koundinya M."/>
            <person name="Raphael J."/>
            <person name="Moreira D."/>
            <person name="Kelley T."/>
            <person name="LaBaer J."/>
            <person name="Lin Y."/>
            <person name="Phelan M."/>
            <person name="Farmer A."/>
        </authorList>
    </citation>
    <scope>NUCLEOTIDE SEQUENCE [LARGE SCALE MRNA] (ISOFORM 1)</scope>
</reference>
<reference key="4">
    <citation type="journal article" date="2004" name="Nat. Genet.">
        <title>Complete sequencing and characterization of 21,243 full-length human cDNAs.</title>
        <authorList>
            <person name="Ota T."/>
            <person name="Suzuki Y."/>
            <person name="Nishikawa T."/>
            <person name="Otsuki T."/>
            <person name="Sugiyama T."/>
            <person name="Irie R."/>
            <person name="Wakamatsu A."/>
            <person name="Hayashi K."/>
            <person name="Sato H."/>
            <person name="Nagai K."/>
            <person name="Kimura K."/>
            <person name="Makita H."/>
            <person name="Sekine M."/>
            <person name="Obayashi M."/>
            <person name="Nishi T."/>
            <person name="Shibahara T."/>
            <person name="Tanaka T."/>
            <person name="Ishii S."/>
            <person name="Yamamoto J."/>
            <person name="Saito K."/>
            <person name="Kawai Y."/>
            <person name="Isono Y."/>
            <person name="Nakamura Y."/>
            <person name="Nagahari K."/>
            <person name="Murakami K."/>
            <person name="Yasuda T."/>
            <person name="Iwayanagi T."/>
            <person name="Wagatsuma M."/>
            <person name="Shiratori A."/>
            <person name="Sudo H."/>
            <person name="Hosoiri T."/>
            <person name="Kaku Y."/>
            <person name="Kodaira H."/>
            <person name="Kondo H."/>
            <person name="Sugawara M."/>
            <person name="Takahashi M."/>
            <person name="Kanda K."/>
            <person name="Yokoi T."/>
            <person name="Furuya T."/>
            <person name="Kikkawa E."/>
            <person name="Omura Y."/>
            <person name="Abe K."/>
            <person name="Kamihara K."/>
            <person name="Katsuta N."/>
            <person name="Sato K."/>
            <person name="Tanikawa M."/>
            <person name="Yamazaki M."/>
            <person name="Ninomiya K."/>
            <person name="Ishibashi T."/>
            <person name="Yamashita H."/>
            <person name="Murakawa K."/>
            <person name="Fujimori K."/>
            <person name="Tanai H."/>
            <person name="Kimata M."/>
            <person name="Watanabe M."/>
            <person name="Hiraoka S."/>
            <person name="Chiba Y."/>
            <person name="Ishida S."/>
            <person name="Ono Y."/>
            <person name="Takiguchi S."/>
            <person name="Watanabe S."/>
            <person name="Yosida M."/>
            <person name="Hotuta T."/>
            <person name="Kusano J."/>
            <person name="Kanehori K."/>
            <person name="Takahashi-Fujii A."/>
            <person name="Hara H."/>
            <person name="Tanase T.-O."/>
            <person name="Nomura Y."/>
            <person name="Togiya S."/>
            <person name="Komai F."/>
            <person name="Hara R."/>
            <person name="Takeuchi K."/>
            <person name="Arita M."/>
            <person name="Imose N."/>
            <person name="Musashino K."/>
            <person name="Yuuki H."/>
            <person name="Oshima A."/>
            <person name="Sasaki N."/>
            <person name="Aotsuka S."/>
            <person name="Yoshikawa Y."/>
            <person name="Matsunawa H."/>
            <person name="Ichihara T."/>
            <person name="Shiohata N."/>
            <person name="Sano S."/>
            <person name="Moriya S."/>
            <person name="Momiyama H."/>
            <person name="Satoh N."/>
            <person name="Takami S."/>
            <person name="Terashima Y."/>
            <person name="Suzuki O."/>
            <person name="Nakagawa S."/>
            <person name="Senoh A."/>
            <person name="Mizoguchi H."/>
            <person name="Goto Y."/>
            <person name="Shimizu F."/>
            <person name="Wakebe H."/>
            <person name="Hishigaki H."/>
            <person name="Watanabe T."/>
            <person name="Sugiyama A."/>
            <person name="Takemoto M."/>
            <person name="Kawakami B."/>
            <person name="Yamazaki M."/>
            <person name="Watanabe K."/>
            <person name="Kumagai A."/>
            <person name="Itakura S."/>
            <person name="Fukuzumi Y."/>
            <person name="Fujimori Y."/>
            <person name="Komiyama M."/>
            <person name="Tashiro H."/>
            <person name="Tanigami A."/>
            <person name="Fujiwara T."/>
            <person name="Ono T."/>
            <person name="Yamada K."/>
            <person name="Fujii Y."/>
            <person name="Ozaki K."/>
            <person name="Hirao M."/>
            <person name="Ohmori Y."/>
            <person name="Kawabata A."/>
            <person name="Hikiji T."/>
            <person name="Kobatake N."/>
            <person name="Inagaki H."/>
            <person name="Ikema Y."/>
            <person name="Okamoto S."/>
            <person name="Okitani R."/>
            <person name="Kawakami T."/>
            <person name="Noguchi S."/>
            <person name="Itoh T."/>
            <person name="Shigeta K."/>
            <person name="Senba T."/>
            <person name="Matsumura K."/>
            <person name="Nakajima Y."/>
            <person name="Mizuno T."/>
            <person name="Morinaga M."/>
            <person name="Sasaki M."/>
            <person name="Togashi T."/>
            <person name="Oyama M."/>
            <person name="Hata H."/>
            <person name="Watanabe M."/>
            <person name="Komatsu T."/>
            <person name="Mizushima-Sugano J."/>
            <person name="Satoh T."/>
            <person name="Shirai Y."/>
            <person name="Takahashi Y."/>
            <person name="Nakagawa K."/>
            <person name="Okumura K."/>
            <person name="Nagase T."/>
            <person name="Nomura N."/>
            <person name="Kikuchi H."/>
            <person name="Masuho Y."/>
            <person name="Yamashita R."/>
            <person name="Nakai K."/>
            <person name="Yada T."/>
            <person name="Nakamura Y."/>
            <person name="Ohara O."/>
            <person name="Isogai T."/>
            <person name="Sugano S."/>
        </authorList>
    </citation>
    <scope>NUCLEOTIDE SEQUENCE [LARGE SCALE MRNA] (ISOFORM 2)</scope>
    <source>
        <tissue>Thymus</tissue>
    </source>
</reference>
<reference key="5">
    <citation type="submission" date="2005-04" db="EMBL/GenBank/DDBJ databases">
        <authorList>
            <person name="Suzuki Y."/>
            <person name="Sugano S."/>
            <person name="Totoki Y."/>
            <person name="Toyoda A."/>
            <person name="Takeda T."/>
            <person name="Sakaki Y."/>
            <person name="Tanaka A."/>
            <person name="Yokoyama S."/>
        </authorList>
    </citation>
    <scope>NUCLEOTIDE SEQUENCE [LARGE SCALE MRNA] (ISOFORM 1)</scope>
    <source>
        <tissue>Liver</tissue>
    </source>
</reference>
<reference key="6">
    <citation type="journal article" date="2006" name="Nature">
        <title>The finished DNA sequence of human chromosome 12.</title>
        <authorList>
            <person name="Scherer S.E."/>
            <person name="Muzny D.M."/>
            <person name="Buhay C.J."/>
            <person name="Chen R."/>
            <person name="Cree A."/>
            <person name="Ding Y."/>
            <person name="Dugan-Rocha S."/>
            <person name="Gill R."/>
            <person name="Gunaratne P."/>
            <person name="Harris R.A."/>
            <person name="Hawes A.C."/>
            <person name="Hernandez J."/>
            <person name="Hodgson A.V."/>
            <person name="Hume J."/>
            <person name="Jackson A."/>
            <person name="Khan Z.M."/>
            <person name="Kovar-Smith C."/>
            <person name="Lewis L.R."/>
            <person name="Lozado R.J."/>
            <person name="Metzker M.L."/>
            <person name="Milosavljevic A."/>
            <person name="Miner G.R."/>
            <person name="Montgomery K.T."/>
            <person name="Morgan M.B."/>
            <person name="Nazareth L.V."/>
            <person name="Scott G."/>
            <person name="Sodergren E."/>
            <person name="Song X.-Z."/>
            <person name="Steffen D."/>
            <person name="Lovering R.C."/>
            <person name="Wheeler D.A."/>
            <person name="Worley K.C."/>
            <person name="Yuan Y."/>
            <person name="Zhang Z."/>
            <person name="Adams C.Q."/>
            <person name="Ansari-Lari M.A."/>
            <person name="Ayele M."/>
            <person name="Brown M.J."/>
            <person name="Chen G."/>
            <person name="Chen Z."/>
            <person name="Clerc-Blankenburg K.P."/>
            <person name="Davis C."/>
            <person name="Delgado O."/>
            <person name="Dinh H.H."/>
            <person name="Draper H."/>
            <person name="Gonzalez-Garay M.L."/>
            <person name="Havlak P."/>
            <person name="Jackson L.R."/>
            <person name="Jacob L.S."/>
            <person name="Kelly S.H."/>
            <person name="Li L."/>
            <person name="Li Z."/>
            <person name="Liu J."/>
            <person name="Liu W."/>
            <person name="Lu J."/>
            <person name="Maheshwari M."/>
            <person name="Nguyen B.-V."/>
            <person name="Okwuonu G.O."/>
            <person name="Pasternak S."/>
            <person name="Perez L.M."/>
            <person name="Plopper F.J.H."/>
            <person name="Santibanez J."/>
            <person name="Shen H."/>
            <person name="Tabor P.E."/>
            <person name="Verduzco D."/>
            <person name="Waldron L."/>
            <person name="Wang Q."/>
            <person name="Williams G.A."/>
            <person name="Zhang J."/>
            <person name="Zhou J."/>
            <person name="Allen C.C."/>
            <person name="Amin A.G."/>
            <person name="Anyalebechi V."/>
            <person name="Bailey M."/>
            <person name="Barbaria J.A."/>
            <person name="Bimage K.E."/>
            <person name="Bryant N.P."/>
            <person name="Burch P.E."/>
            <person name="Burkett C.E."/>
            <person name="Burrell K.L."/>
            <person name="Calderon E."/>
            <person name="Cardenas V."/>
            <person name="Carter K."/>
            <person name="Casias K."/>
            <person name="Cavazos I."/>
            <person name="Cavazos S.R."/>
            <person name="Ceasar H."/>
            <person name="Chacko J."/>
            <person name="Chan S.N."/>
            <person name="Chavez D."/>
            <person name="Christopoulos C."/>
            <person name="Chu J."/>
            <person name="Cockrell R."/>
            <person name="Cox C.D."/>
            <person name="Dang M."/>
            <person name="Dathorne S.R."/>
            <person name="David R."/>
            <person name="Davis C.M."/>
            <person name="Davy-Carroll L."/>
            <person name="Deshazo D.R."/>
            <person name="Donlin J.E."/>
            <person name="D'Souza L."/>
            <person name="Eaves K.A."/>
            <person name="Egan A."/>
            <person name="Emery-Cohen A.J."/>
            <person name="Escotto M."/>
            <person name="Flagg N."/>
            <person name="Forbes L.D."/>
            <person name="Gabisi A.M."/>
            <person name="Garza M."/>
            <person name="Hamilton C."/>
            <person name="Henderson N."/>
            <person name="Hernandez O."/>
            <person name="Hines S."/>
            <person name="Hogues M.E."/>
            <person name="Huang M."/>
            <person name="Idlebird D.G."/>
            <person name="Johnson R."/>
            <person name="Jolivet A."/>
            <person name="Jones S."/>
            <person name="Kagan R."/>
            <person name="King L.M."/>
            <person name="Leal B."/>
            <person name="Lebow H."/>
            <person name="Lee S."/>
            <person name="LeVan J.M."/>
            <person name="Lewis L.C."/>
            <person name="London P."/>
            <person name="Lorensuhewa L.M."/>
            <person name="Loulseged H."/>
            <person name="Lovett D.A."/>
            <person name="Lucier A."/>
            <person name="Lucier R.L."/>
            <person name="Ma J."/>
            <person name="Madu R.C."/>
            <person name="Mapua P."/>
            <person name="Martindale A.D."/>
            <person name="Martinez E."/>
            <person name="Massey E."/>
            <person name="Mawhiney S."/>
            <person name="Meador M.G."/>
            <person name="Mendez S."/>
            <person name="Mercado C."/>
            <person name="Mercado I.C."/>
            <person name="Merritt C.E."/>
            <person name="Miner Z.L."/>
            <person name="Minja E."/>
            <person name="Mitchell T."/>
            <person name="Mohabbat F."/>
            <person name="Mohabbat K."/>
            <person name="Montgomery B."/>
            <person name="Moore N."/>
            <person name="Morris S."/>
            <person name="Munidasa M."/>
            <person name="Ngo R.N."/>
            <person name="Nguyen N.B."/>
            <person name="Nickerson E."/>
            <person name="Nwaokelemeh O.O."/>
            <person name="Nwokenkwo S."/>
            <person name="Obregon M."/>
            <person name="Oguh M."/>
            <person name="Oragunye N."/>
            <person name="Oviedo R.J."/>
            <person name="Parish B.J."/>
            <person name="Parker D.N."/>
            <person name="Parrish J."/>
            <person name="Parks K.L."/>
            <person name="Paul H.A."/>
            <person name="Payton B.A."/>
            <person name="Perez A."/>
            <person name="Perrin W."/>
            <person name="Pickens A."/>
            <person name="Primus E.L."/>
            <person name="Pu L.-L."/>
            <person name="Puazo M."/>
            <person name="Quiles M.M."/>
            <person name="Quiroz J.B."/>
            <person name="Rabata D."/>
            <person name="Reeves K."/>
            <person name="Ruiz S.J."/>
            <person name="Shao H."/>
            <person name="Sisson I."/>
            <person name="Sonaike T."/>
            <person name="Sorelle R.P."/>
            <person name="Sutton A.E."/>
            <person name="Svatek A.F."/>
            <person name="Svetz L.A."/>
            <person name="Tamerisa K.S."/>
            <person name="Taylor T.R."/>
            <person name="Teague B."/>
            <person name="Thomas N."/>
            <person name="Thorn R.D."/>
            <person name="Trejos Z.Y."/>
            <person name="Trevino B.K."/>
            <person name="Ukegbu O.N."/>
            <person name="Urban J.B."/>
            <person name="Vasquez L.I."/>
            <person name="Vera V.A."/>
            <person name="Villasana D.M."/>
            <person name="Wang L."/>
            <person name="Ward-Moore S."/>
            <person name="Warren J.T."/>
            <person name="Wei X."/>
            <person name="White F."/>
            <person name="Williamson A.L."/>
            <person name="Wleczyk R."/>
            <person name="Wooden H.S."/>
            <person name="Wooden S.H."/>
            <person name="Yen J."/>
            <person name="Yoon L."/>
            <person name="Yoon V."/>
            <person name="Zorrilla S.E."/>
            <person name="Nelson D."/>
            <person name="Kucherlapati R."/>
            <person name="Weinstock G."/>
            <person name="Gibbs R.A."/>
        </authorList>
    </citation>
    <scope>NUCLEOTIDE SEQUENCE [LARGE SCALE GENOMIC DNA]</scope>
</reference>
<reference key="7">
    <citation type="journal article" date="2004" name="Genome Res.">
        <title>The status, quality, and expansion of the NIH full-length cDNA project: the Mammalian Gene Collection (MGC).</title>
        <authorList>
            <consortium name="The MGC Project Team"/>
        </authorList>
    </citation>
    <scope>NUCLEOTIDE SEQUENCE [LARGE SCALE MRNA] (ISOFORM 1)</scope>
    <source>
        <tissue>Brain</tissue>
        <tissue>Colon</tissue>
        <tissue>Muscle</tissue>
    </source>
</reference>
<reference key="8">
    <citation type="journal article" date="2000" name="J. Cell Biol.">
        <title>Nucleolar localization of human methionyl-tRNA synthetase and its role in ribosomal RNA synthesis.</title>
        <authorList>
            <person name="Ko Y.G."/>
            <person name="Kang Y.S."/>
            <person name="Kim E.K."/>
            <person name="Park S.G."/>
            <person name="Kim S."/>
        </authorList>
    </citation>
    <scope>FUNCTION</scope>
    <scope>SUBCELLULAR LOCATION</scope>
</reference>
<reference key="9">
    <citation type="journal article" date="2001" name="Biochemistry">
        <title>The appended C-domain of human methionyl-tRNA synthetase has a tRNA-sequestering function.</title>
        <authorList>
            <person name="Kaminska M."/>
            <person name="Shalak V."/>
            <person name="Mirande M."/>
        </authorList>
    </citation>
    <scope>FUNCTION</scope>
    <scope>CATALYTIC ACTIVITY</scope>
    <scope>ACTIVITY REGULATION</scope>
    <scope>SUBUNIT</scope>
    <scope>MUTAGENESIS OF ARG-857; LYS-860; LYS-863; LYS-866 AND LYS-880</scope>
</reference>
<reference key="10">
    <citation type="journal article" date="2003" name="Nature">
        <title>Proteomic characterization of the human centrosome by protein correlation profiling.</title>
        <authorList>
            <person name="Andersen J.S."/>
            <person name="Wilkinson C.J."/>
            <person name="Mayor T."/>
            <person name="Mortensen P."/>
            <person name="Nigg E.A."/>
            <person name="Mann M."/>
        </authorList>
    </citation>
    <scope>IDENTIFICATION BY MASS SPECTROMETRY</scope>
    <source>
        <tissue>Lymphoblast</tissue>
    </source>
</reference>
<reference key="11">
    <citation type="journal article" date="2008" name="Mol. Cell">
        <title>Kinase-selective enrichment enables quantitative phosphoproteomics of the kinome across the cell cycle.</title>
        <authorList>
            <person name="Daub H."/>
            <person name="Olsen J.V."/>
            <person name="Bairlein M."/>
            <person name="Gnad F."/>
            <person name="Oppermann F.S."/>
            <person name="Korner R."/>
            <person name="Greff Z."/>
            <person name="Keri G."/>
            <person name="Stemmann O."/>
            <person name="Mann M."/>
        </authorList>
    </citation>
    <scope>IDENTIFICATION BY MASS SPECTROMETRY [LARGE SCALE ANALYSIS]</scope>
    <source>
        <tissue>Cervix carcinoma</tissue>
    </source>
</reference>
<reference key="12">
    <citation type="journal article" date="2008" name="Proc. Natl. Acad. Sci. U.S.A.">
        <title>A quantitative atlas of mitotic phosphorylation.</title>
        <authorList>
            <person name="Dephoure N."/>
            <person name="Zhou C."/>
            <person name="Villen J."/>
            <person name="Beausoleil S.A."/>
            <person name="Bakalarski C.E."/>
            <person name="Elledge S.J."/>
            <person name="Gygi S.P."/>
        </authorList>
    </citation>
    <scope>IDENTIFICATION BY MASS SPECTROMETRY [LARGE SCALE ANALYSIS]</scope>
    <source>
        <tissue>Cervix carcinoma</tissue>
    </source>
</reference>
<reference key="13">
    <citation type="journal article" date="2009" name="Anal. Chem.">
        <title>Lys-N and trypsin cover complementary parts of the phosphoproteome in a refined SCX-based approach.</title>
        <authorList>
            <person name="Gauci S."/>
            <person name="Helbig A.O."/>
            <person name="Slijper M."/>
            <person name="Krijgsveld J."/>
            <person name="Heck A.J."/>
            <person name="Mohammed S."/>
        </authorList>
    </citation>
    <scope>IDENTIFICATION BY MASS SPECTROMETRY [LARGE SCALE ANALYSIS]</scope>
</reference>
<reference key="14">
    <citation type="journal article" date="2009" name="J. Biol. Chem.">
        <title>Dissection of the structural organization of the aminoacyl-tRNA synthetase complex.</title>
        <authorList>
            <person name="Kaminska M."/>
            <person name="Havrylenko S."/>
            <person name="Decottignies P."/>
            <person name="Gillet S."/>
            <person name="Le Marechal P."/>
            <person name="Negrutskii B."/>
            <person name="Mirande M."/>
        </authorList>
    </citation>
    <scope>SUBUNIT</scope>
    <scope>IDENTIFICATION BY MASS SPECTROMETRY</scope>
</reference>
<reference key="15">
    <citation type="journal article" date="2009" name="J. Biol. Chem.">
        <title>Dynamic Organization of Aminoacyl-tRNA Synthetase Complexes in the Cytoplasm of Human Cells.</title>
        <authorList>
            <person name="Kaminska M."/>
            <person name="Havrylenko S."/>
            <person name="Decottignies P."/>
            <person name="Le Marechal P."/>
            <person name="Negrutskii B."/>
            <person name="Mirande M."/>
        </authorList>
    </citation>
    <scope>SUBCELLULAR LOCATION</scope>
    <scope>SUBUNIT</scope>
</reference>
<reference key="16">
    <citation type="journal article" date="2010" name="Sci. Signal.">
        <title>Quantitative phosphoproteomics reveals widespread full phosphorylation site occupancy during mitosis.</title>
        <authorList>
            <person name="Olsen J.V."/>
            <person name="Vermeulen M."/>
            <person name="Santamaria A."/>
            <person name="Kumar C."/>
            <person name="Miller M.L."/>
            <person name="Jensen L.J."/>
            <person name="Gnad F."/>
            <person name="Cox J."/>
            <person name="Jensen T.S."/>
            <person name="Nigg E.A."/>
            <person name="Brunak S."/>
            <person name="Mann M."/>
        </authorList>
    </citation>
    <scope>IDENTIFICATION BY MASS SPECTROMETRY [LARGE SCALE ANALYSIS]</scope>
    <source>
        <tissue>Cervix carcinoma</tissue>
    </source>
</reference>
<reference key="17">
    <citation type="journal article" date="2011" name="BMC Syst. Biol.">
        <title>Initial characterization of the human central proteome.</title>
        <authorList>
            <person name="Burkard T.R."/>
            <person name="Planyavsky M."/>
            <person name="Kaupe I."/>
            <person name="Breitwieser F.P."/>
            <person name="Buerckstuemmer T."/>
            <person name="Bennett K.L."/>
            <person name="Superti-Furga G."/>
            <person name="Colinge J."/>
        </authorList>
    </citation>
    <scope>IDENTIFICATION BY MASS SPECTROMETRY [LARGE SCALE ANALYSIS]</scope>
</reference>
<reference key="18">
    <citation type="journal article" date="2011" name="Sci. Signal.">
        <title>System-wide temporal characterization of the proteome and phosphoproteome of human embryonic stem cell differentiation.</title>
        <authorList>
            <person name="Rigbolt K.T."/>
            <person name="Prokhorova T.A."/>
            <person name="Akimov V."/>
            <person name="Henningsen J."/>
            <person name="Johansen P.T."/>
            <person name="Kratchmarova I."/>
            <person name="Kassem M."/>
            <person name="Mann M."/>
            <person name="Olsen J.V."/>
            <person name="Blagoev B."/>
        </authorList>
    </citation>
    <scope>IDENTIFICATION BY MASS SPECTROMETRY [LARGE SCALE ANALYSIS]</scope>
</reference>
<reference key="19">
    <citation type="journal article" date="2013" name="J. Neurol. Neurosurg. Psych.">
        <title>Exome sequencing identifies a significant variant in methionyl-tRNA synthetase (MARS) in a family with late-onset CMT2.</title>
        <authorList>
            <consortium name="Inherited Neuropathy Consortium"/>
            <person name="Gonzalez M."/>
            <person name="McLaughlin H."/>
            <person name="Houlden H."/>
            <person name="Guo M."/>
            <person name="Yo-Tsen L."/>
            <person name="Hadjivassilious M."/>
            <person name="Speziani F."/>
            <person name="Yang X.L."/>
            <person name="Antonellis A."/>
            <person name="Reilly M.M."/>
            <person name="Zuchner S."/>
        </authorList>
    </citation>
    <scope>INVOLVEMENT IN CMT2U</scope>
    <scope>VARIANT CMT2U CYS-618</scope>
    <scope>CHARACTERIZATION OF VARIANT CMT2U CYS-618</scope>
</reference>
<reference key="20">
    <citation type="journal article" date="2013" name="J. Proteome Res.">
        <title>Toward a comprehensive characterization of a human cancer cell phosphoproteome.</title>
        <authorList>
            <person name="Zhou H."/>
            <person name="Di Palma S."/>
            <person name="Preisinger C."/>
            <person name="Peng M."/>
            <person name="Polat A.N."/>
            <person name="Heck A.J."/>
            <person name="Mohammed S."/>
        </authorList>
    </citation>
    <scope>IDENTIFICATION BY MASS SPECTROMETRY [LARGE SCALE ANALYSIS]</scope>
    <source>
        <tissue>Cervix carcinoma</tissue>
        <tissue>Erythroleukemia</tissue>
    </source>
</reference>
<reference key="21">
    <citation type="journal article" date="2014" name="Clin. Genet.">
        <title>Rare variants in methionyl- and tyrosyl-tRNA synthetase genes in late-onset autosomal dominant Charcot-Marie-Tooth neuropathy.</title>
        <authorList>
            <person name="Hyun Y.S."/>
            <person name="Park H.J."/>
            <person name="Heo S.H."/>
            <person name="Yoon B.R."/>
            <person name="Nam S.H."/>
            <person name="Kim S.B."/>
            <person name="Park C.I."/>
            <person name="Choi B.O."/>
            <person name="Chung K.W."/>
        </authorList>
    </citation>
    <scope>INVOLVEMENT IN CMT2U</scope>
    <scope>VARIANT CMT2U THR-800</scope>
</reference>
<reference key="22">
    <citation type="journal article" date="2014" name="J. Proteomics">
        <title>An enzyme assisted RP-RPLC approach for in-depth analysis of human liver phosphoproteome.</title>
        <authorList>
            <person name="Bian Y."/>
            <person name="Song C."/>
            <person name="Cheng K."/>
            <person name="Dong M."/>
            <person name="Wang F."/>
            <person name="Huang J."/>
            <person name="Sun D."/>
            <person name="Wang L."/>
            <person name="Ye M."/>
            <person name="Zou H."/>
        </authorList>
    </citation>
    <scope>IDENTIFICATION BY MASS SPECTROMETRY [LARGE SCALE ANALYSIS]</scope>
    <source>
        <tissue>Liver</tissue>
    </source>
</reference>
<reference key="23">
    <citation type="journal article" date="2021" name="Hum. Mol. Genet.">
        <title>Protein instability associated with AARS1 and MARS1 mutations causes trichothiodystrophy.</title>
        <authorList>
            <person name="Botta E."/>
            <person name="Theil A.F."/>
            <person name="Raams A."/>
            <person name="Caligiuri G."/>
            <person name="Giachetti S."/>
            <person name="Bione S."/>
            <person name="Accadia M."/>
            <person name="Lombardi A."/>
            <person name="Smith D.E.C."/>
            <person name="Mendes M.I."/>
            <person name="Swagemakers S.M.A."/>
            <person name="van der Spek P.J."/>
            <person name="Salomons G.S."/>
            <person name="Hoeijmakers J.H.J."/>
            <person name="Yesodharan D."/>
            <person name="Nampoothiri S."/>
            <person name="Ogi T."/>
            <person name="Lehmann A.R."/>
            <person name="Orioli D."/>
            <person name="Vermeulen W."/>
        </authorList>
    </citation>
    <scope>INVOLVEMENT IN TTD9</scope>
    <scope>VARIANT TTD9 MET-401</scope>
    <scope>CHARACTERIZATION OF VARIANT TTD9 MET-401</scope>
    <scope>FUNCTION</scope>
</reference>
<reference key="24">
    <citation type="journal article" date="2022" name="Neurol. Sci.">
        <title>Four pedigrees with aminoacyl-tRNA synthetase abnormalities.</title>
        <authorList>
            <person name="Okamoto N."/>
            <person name="Miya F."/>
            <person name="Tsunoda T."/>
            <person name="Kanemura Y."/>
            <person name="Saitoh S."/>
            <person name="Kato M."/>
            <person name="Yanagi K."/>
            <person name="Kaname T."/>
            <person name="Kosaki K."/>
        </authorList>
    </citation>
    <scope>INVOLVEMENT IN SPG70</scope>
    <scope>VARIANTS SPG70 TYR-389 AND TRP-625</scope>
</reference>
<reference key="25">
    <citation type="submission" date="2006-10" db="PDB data bank">
        <title>Solution structures of the WHEP-TRS domain of human methionyl-tRNA synthetase.</title>
        <authorList>
            <consortium name="RIKEN structural genomics initiative (RSGI)"/>
        </authorList>
    </citation>
    <scope>STRUCTURE BY NMR OF 835-900</scope>
</reference>
<reference evidence="20" key="26">
    <citation type="submission" date="2013-05" db="PDB data bank">
        <title>Crystal Structure of the Aimp3-Mrs N-Terminal Domain Complex in Different Space Group.</title>
        <authorList>
            <person name="Cho H.Y."/>
            <person name="Seo W.W."/>
            <person name="Cho H.J."/>
            <person name="Kang B.S."/>
        </authorList>
    </citation>
    <scope>X-RAY CRYSTALLOGRAPHY (1.89 ANGSTROMS) OF 1-224 IN COMPLEX WITH EEF1E1</scope>
</reference>
<reference key="27">
    <citation type="journal article" date="2015" name="J. Biol. Chem.">
        <title>Assembly of Multi-tRNA Synthetase Complex via Heterotetrameric Glutathione Transferase-homology Domains.</title>
        <authorList>
            <person name="Cho H.Y."/>
            <person name="Maeng S.J."/>
            <person name="Cho H.J."/>
            <person name="Choi Y.S."/>
            <person name="Chung J.M."/>
            <person name="Lee S."/>
            <person name="Kim H.K."/>
            <person name="Kim J.H."/>
            <person name="Eom C.Y."/>
            <person name="Kim Y.G."/>
            <person name="Guo M."/>
            <person name="Jung H.S."/>
            <person name="Kang B.S."/>
            <person name="Kim S."/>
        </authorList>
    </citation>
    <scope>X-RAY CRYSTALLOGRAPHY (1.60 ANGSTROMS) OF 1-207 IN COMPLEX WITH EEF1E1</scope>
    <scope>INTERACTION WITH EEF1E1</scope>
    <scope>SUBUNIT</scope>
    <scope>SUBCELLULAR LOCATION</scope>
    <scope>MUTAGENESIS OF ALA-64 AND GLU-86</scope>
</reference>
<reference key="28">
    <citation type="journal article" date="2013" name="BMC Med. Genet.">
        <title>Rare recessive loss-of-function methionyl-tRNA synthetase mutations presenting as a multi-organ phenotype.</title>
        <authorList>
            <person name="van Meel E."/>
            <person name="Wegner D.J."/>
            <person name="Cliften P."/>
            <person name="Willing M.C."/>
            <person name="White F.V."/>
            <person name="Kornfeld S."/>
            <person name="Cole F.S."/>
        </authorList>
    </citation>
    <scope>INVOLVEMENT IN ILLD</scope>
    <scope>VARIANTS ILLD LEU-370 AND THR-523</scope>
</reference>
<reference key="29">
    <citation type="journal article" date="2014" name="Science">
        <title>Exome sequencing links corticospinal motor neuron disease to common neurodegenerative disorders.</title>
        <authorList>
            <person name="Novarino G."/>
            <person name="Fenstermaker A.G."/>
            <person name="Zaki M.S."/>
            <person name="Hofree M."/>
            <person name="Silhavy J.L."/>
            <person name="Heiberg A.D."/>
            <person name="Abdellateef M."/>
            <person name="Rosti B."/>
            <person name="Scott E."/>
            <person name="Mansour L."/>
            <person name="Masri A."/>
            <person name="Kayserili H."/>
            <person name="Al-Aama J.Y."/>
            <person name="Abdel-Salam G.M."/>
            <person name="Karminejad A."/>
            <person name="Kara M."/>
            <person name="Kara B."/>
            <person name="Bozorgmehri B."/>
            <person name="Ben-Omran T."/>
            <person name="Mojahedi F."/>
            <person name="Mahmoud I.G."/>
            <person name="Bouslam N."/>
            <person name="Bouhouche A."/>
            <person name="Benomar A."/>
            <person name="Hanein S."/>
            <person name="Raymond L."/>
            <person name="Forlani S."/>
            <person name="Mascaro M."/>
            <person name="Selim L."/>
            <person name="Shehata N."/>
            <person name="Al-Allawi N."/>
            <person name="Bindu P.S."/>
            <person name="Azam M."/>
            <person name="Gunel M."/>
            <person name="Caglayan A."/>
            <person name="Bilguvar K."/>
            <person name="Tolun A."/>
            <person name="Issa M.Y."/>
            <person name="Schroth J."/>
            <person name="Spencer E.G."/>
            <person name="Rosti R.O."/>
            <person name="Akizu N."/>
            <person name="Vaux K.K."/>
            <person name="Johansen A."/>
            <person name="Koh A.A."/>
            <person name="Megahed H."/>
            <person name="Durr A."/>
            <person name="Brice A."/>
            <person name="Stevanin G."/>
            <person name="Gabriel S.B."/>
            <person name="Ideker T."/>
            <person name="Gleeson J.G."/>
        </authorList>
    </citation>
    <scope>VARIANTS MET-5 AND TRP-702</scope>
</reference>
<reference key="30">
    <citation type="journal article" date="2015" name="Am. J. Hum. Genet.">
        <title>Biallelic mutations of methionyl-tRNA synthetase cause a specific type of pulmonary alveolar proteinosis prevalent on Reunion island.</title>
        <authorList>
            <person name="Hadchouel A."/>
            <person name="Wieland T."/>
            <person name="Griese M."/>
            <person name="Baruffini E."/>
            <person name="Lorenz-Depiereux B."/>
            <person name="Enaud L."/>
            <person name="Graf E."/>
            <person name="Dubus J.C."/>
            <person name="Halioui-Louhaichi S."/>
            <person name="Coulomb A."/>
            <person name="Delacourt C."/>
            <person name="Eckstein G."/>
            <person name="Zarbock R."/>
            <person name="Schwarzmayr T."/>
            <person name="Cartault F."/>
            <person name="Meitinger T."/>
            <person name="Lodi T."/>
            <person name="de Blic J."/>
            <person name="Strom T.M."/>
        </authorList>
    </citation>
    <scope>VARIANTS ILLD CYS-344; THR-393; LEU-567 AND VAL-605</scope>
    <scope>VARIANTS LEU-206 AND GLN-727</scope>
</reference>
<protein>
    <recommendedName>
        <fullName>Methionine--tRNA ligase, cytoplasmic</fullName>
        <ecNumber evidence="4">6.1.1.10</ecNumber>
    </recommendedName>
    <alternativeName>
        <fullName>Methionyl-tRNA synthetase</fullName>
        <shortName>MetRS</shortName>
    </alternativeName>
</protein>
<gene>
    <name evidence="19" type="primary">MARS1</name>
    <name type="synonym">MARS</name>
</gene>
<feature type="chain" id="PRO_0000139262" description="Methionine--tRNA ligase, cytoplasmic">
    <location>
        <begin position="1"/>
        <end position="900"/>
    </location>
</feature>
<feature type="domain" description="GST C-terminal">
    <location>
        <begin position="74"/>
        <end position="198"/>
    </location>
</feature>
<feature type="domain" description="WHEP-TRS">
    <location>
        <begin position="841"/>
        <end position="897"/>
    </location>
</feature>
<feature type="short sequence motif" description="'HIGH' region">
    <location>
        <begin position="273"/>
        <end position="283"/>
    </location>
</feature>
<feature type="short sequence motif" description="'KMSKS' region">
    <location>
        <begin position="593"/>
        <end position="597"/>
    </location>
</feature>
<feature type="binding site" evidence="1">
    <location>
        <position position="596"/>
    </location>
    <ligand>
        <name>ATP</name>
        <dbReference type="ChEBI" id="CHEBI:30616"/>
    </ligand>
</feature>
<feature type="modified residue" description="Phosphoserine" evidence="2">
    <location>
        <position position="825"/>
    </location>
</feature>
<feature type="modified residue" description="Phosphothreonine" evidence="2">
    <location>
        <position position="835"/>
    </location>
</feature>
<feature type="splice variant" id="VSP_056563" description="In isoform 2." evidence="16">
    <original>V</original>
    <variation>P</variation>
    <location>
        <position position="546"/>
    </location>
</feature>
<feature type="splice variant" id="VSP_056564" description="In isoform 2." evidence="16">
    <location>
        <begin position="547"/>
        <end position="900"/>
    </location>
</feature>
<feature type="sequence variant" id="VAR_077848" description="Found in a patient with spastic paraplegia; uncertain significance; dbSNP:rs587777227." evidence="10">
    <original>V</original>
    <variation>M</variation>
    <location>
        <position position="5"/>
    </location>
</feature>
<feature type="sequence variant" id="VAR_075360" description="In dbSNP:rs138776588." evidence="11">
    <original>P</original>
    <variation>L</variation>
    <location>
        <position position="206"/>
    </location>
</feature>
<feature type="sequence variant" id="VAR_075361" description="In ILLD; when assayed in yeast, induces a slight growth retardation and reduction in methionine incorporation; may interfere with efficient substrate binding; dbSNP:rs766466297." evidence="11">
    <original>Y</original>
    <variation>C</variation>
    <location>
        <position position="344"/>
    </location>
</feature>
<feature type="sequence variant" id="VAR_070872" description="In ILLD; dbSNP:rs140467171." evidence="8">
    <original>F</original>
    <variation>L</variation>
    <location>
        <position position="370"/>
    </location>
</feature>
<feature type="sequence variant" id="VAR_088477" description="In SPG70; uncertain significance." evidence="14">
    <original>C</original>
    <variation>Y</variation>
    <location>
        <position position="389"/>
    </location>
</feature>
<feature type="sequence variant" id="VAR_075362" description="In ILLD; may act as a disease modifier aggravating the phenotype; found in patients that carried additional mutations C-344 and/or L-567; when assayed in yeast, does not exhibit any phenotype; when assayed in yeast in association with L-567, increases L-567-induced growth retardation and reduction in methionine incorporation; dbSNP:rs141340466." evidence="11">
    <original>A</original>
    <variation>T</variation>
    <location>
        <position position="393"/>
    </location>
</feature>
<feature type="sequence variant" id="VAR_086779" description="In TTD9; uncertain significance; homozygous patient cells show decreased methionyl-tRNA aminoacylation; decreased protein abundance in homozygous patient cells; dbSNP:rs774447812." evidence="13">
    <original>V</original>
    <variation>M</variation>
    <location>
        <position position="401"/>
    </location>
</feature>
<feature type="sequence variant" id="VAR_070873" description="In ILLD; dbSNP:rs201555303." evidence="8">
    <original>I</original>
    <variation>T</variation>
    <location>
        <position position="523"/>
    </location>
</feature>
<feature type="sequence variant" id="VAR_075363" description="In ILLD; when assayed in yeast, reduces methionine incorporation; when assayed in yeast in association with T-393, induces growth retardation and strong reduction in methionine incorporation; may interfere with efficient substrate binding; dbSNP:rs143592405." evidence="11">
    <original>S</original>
    <variation>L</variation>
    <location>
        <position position="567"/>
    </location>
</feature>
<feature type="sequence variant" id="VAR_075364" description="In ILLD; when assayed in yeast, induces a slight growth retardation and reduction in methionine incorporation; may interfere with efficient substrate binding; dbSNP:rs756021768." evidence="11">
    <original>D</original>
    <variation>V</variation>
    <location>
        <position position="605"/>
    </location>
</feature>
<feature type="sequence variant" id="VAR_073377" description="In CMT2U; loss of function mutation; dbSNP:rs587777718." evidence="7">
    <original>R</original>
    <variation>C</variation>
    <location>
        <position position="618"/>
    </location>
</feature>
<feature type="sequence variant" id="VAR_088478" description="In SPG70; uncertain significance; dbSNP:rs754546247." evidence="14">
    <original>R</original>
    <variation>W</variation>
    <location>
        <position position="625"/>
    </location>
</feature>
<feature type="sequence variant" id="VAR_020459" description="In dbSNP:rs1054403.">
    <original>A</original>
    <variation>D</variation>
    <location>
        <position position="683"/>
    </location>
</feature>
<feature type="sequence variant" id="VAR_077849" description="Found in a patient with spastic paraplegia; uncertain significance; dbSNP:rs587777228." evidence="10">
    <original>R</original>
    <variation>W</variation>
    <location>
        <position position="702"/>
    </location>
</feature>
<feature type="sequence variant" id="VAR_075365" description="In dbSNP:rs113808165." evidence="11">
    <original>R</original>
    <variation>Q</variation>
    <location>
        <position position="727"/>
    </location>
</feature>
<feature type="sequence variant" id="VAR_073378" description="In CMT2U; dbSNP:rs781249411." evidence="9">
    <original>P</original>
    <variation>T</variation>
    <location>
        <position position="800"/>
    </location>
</feature>
<feature type="mutagenesis site" description="Loss of interaction with EEF1E1." evidence="12">
    <original>A</original>
    <variation>R</variation>
    <location>
        <position position="64"/>
    </location>
</feature>
<feature type="mutagenesis site" description="Loss of interaction with EEF1E1." evidence="12">
    <original>E</original>
    <variation>R</variation>
    <location>
        <position position="86"/>
    </location>
</feature>
<feature type="mutagenesis site" description="No effect on enzyme activity." evidence="4">
    <original>R</original>
    <variation>A</variation>
    <location>
        <position position="857"/>
    </location>
</feature>
<feature type="mutagenesis site" description="Strongly decreased affinity for tRNA." evidence="4">
    <original>K</original>
    <variation>A</variation>
    <location>
        <position position="860"/>
    </location>
</feature>
<feature type="mutagenesis site" description="Slightly decreased enzyme activity." evidence="4">
    <original>K</original>
    <variation>A</variation>
    <location>
        <position position="863"/>
    </location>
</feature>
<feature type="mutagenesis site" description="Slightly decreased enzyme activity." evidence="4">
    <original>K</original>
    <variation>A</variation>
    <location>
        <position position="866"/>
    </location>
</feature>
<feature type="mutagenesis site" description="Strongly decreased affinity for tRNA." evidence="4">
    <original>K</original>
    <variation>A</variation>
    <location>
        <position position="880"/>
    </location>
</feature>
<feature type="sequence conflict" description="In Ref. 1; CAA64381." evidence="17" ref="1">
    <original>L</original>
    <variation>V</variation>
    <location>
        <position position="53"/>
    </location>
</feature>
<feature type="sequence conflict" description="In Ref. 1; CAA64381." evidence="17" ref="1">
    <original>A</original>
    <variation>P</variation>
    <location>
        <position position="99"/>
    </location>
</feature>
<feature type="sequence conflict" description="In Ref. 1; CAA64381." evidence="17" ref="1">
    <original>L</original>
    <variation>Q</variation>
    <location>
        <position position="152"/>
    </location>
</feature>
<feature type="sequence conflict" description="In Ref. 7; AAH15011." evidence="17" ref="7">
    <original>W</original>
    <variation>S</variation>
    <location>
        <position position="172"/>
    </location>
</feature>
<feature type="sequence conflict" description="In Ref. 5; BAD96487." evidence="17" ref="5">
    <original>L</original>
    <variation>P</variation>
    <location>
        <position position="250"/>
    </location>
</feature>
<feature type="sequence conflict" description="In Ref. 1; CAA64381/CAA89153." evidence="17" ref="1">
    <original>A</original>
    <variation>G</variation>
    <location>
        <position position="683"/>
    </location>
</feature>
<feature type="strand" evidence="22">
    <location>
        <begin position="2"/>
        <end position="5"/>
    </location>
</feature>
<feature type="helix" evidence="22">
    <location>
        <begin position="12"/>
        <end position="18"/>
    </location>
</feature>
<feature type="helix" evidence="22">
    <location>
        <begin position="19"/>
        <end position="22"/>
    </location>
</feature>
<feature type="turn" evidence="22">
    <location>
        <begin position="23"/>
        <end position="25"/>
    </location>
</feature>
<feature type="strand" evidence="22">
    <location>
        <begin position="29"/>
        <end position="32"/>
    </location>
</feature>
<feature type="strand" evidence="22">
    <location>
        <begin position="48"/>
        <end position="52"/>
    </location>
</feature>
<feature type="helix" evidence="22">
    <location>
        <begin position="62"/>
        <end position="72"/>
    </location>
</feature>
<feature type="helix" evidence="22">
    <location>
        <begin position="79"/>
        <end position="90"/>
    </location>
</feature>
<feature type="helix" evidence="22">
    <location>
        <begin position="92"/>
        <end position="104"/>
    </location>
</feature>
<feature type="helix" evidence="22">
    <location>
        <begin position="111"/>
        <end position="114"/>
    </location>
</feature>
<feature type="helix" evidence="22">
    <location>
        <begin position="115"/>
        <end position="117"/>
    </location>
</feature>
<feature type="helix" evidence="22">
    <location>
        <begin position="118"/>
        <end position="130"/>
    </location>
</feature>
<feature type="strand" evidence="22">
    <location>
        <begin position="131"/>
        <end position="140"/>
    </location>
</feature>
<feature type="helix" evidence="22">
    <location>
        <begin position="143"/>
        <end position="156"/>
    </location>
</feature>
<feature type="helix" evidence="22">
    <location>
        <begin position="159"/>
        <end position="161"/>
    </location>
</feature>
<feature type="helix" evidence="22">
    <location>
        <begin position="167"/>
        <end position="177"/>
    </location>
</feature>
<feature type="helix" evidence="22">
    <location>
        <begin position="180"/>
        <end position="190"/>
    </location>
</feature>
<feature type="helix" evidence="22">
    <location>
        <begin position="194"/>
        <end position="198"/>
    </location>
</feature>
<feature type="helix" evidence="22">
    <location>
        <begin position="199"/>
        <end position="202"/>
    </location>
</feature>
<feature type="helix" evidence="23">
    <location>
        <begin position="230"/>
        <end position="241"/>
    </location>
</feature>
<feature type="helix" evidence="23">
    <location>
        <begin position="243"/>
        <end position="246"/>
    </location>
</feature>
<feature type="strand" evidence="23">
    <location>
        <begin position="265"/>
        <end position="270"/>
    </location>
</feature>
<feature type="helix" evidence="23">
    <location>
        <begin position="281"/>
        <end position="286"/>
    </location>
</feature>
<feature type="helix" evidence="23">
    <location>
        <begin position="288"/>
        <end position="300"/>
    </location>
</feature>
<feature type="strand" evidence="23">
    <location>
        <begin position="304"/>
        <end position="312"/>
    </location>
</feature>
<feature type="helix" evidence="23">
    <location>
        <begin position="316"/>
        <end position="324"/>
    </location>
</feature>
<feature type="helix" evidence="23">
    <location>
        <begin position="329"/>
        <end position="346"/>
    </location>
</feature>
<feature type="strand" evidence="23">
    <location>
        <begin position="352"/>
        <end position="357"/>
    </location>
</feature>
<feature type="helix" evidence="23">
    <location>
        <begin position="360"/>
        <end position="374"/>
    </location>
</feature>
<feature type="turn" evidence="23">
    <location>
        <begin position="375"/>
        <end position="377"/>
    </location>
</feature>
<feature type="strand" evidence="23">
    <location>
        <begin position="379"/>
        <end position="389"/>
    </location>
</feature>
<feature type="turn" evidence="23">
    <location>
        <begin position="390"/>
        <end position="393"/>
    </location>
</feature>
<feature type="helix" evidence="23">
    <location>
        <begin position="398"/>
        <end position="400"/>
    </location>
</feature>
<feature type="strand" evidence="23">
    <location>
        <begin position="401"/>
        <end position="404"/>
    </location>
</feature>
<feature type="turn" evidence="23">
    <location>
        <begin position="406"/>
        <end position="408"/>
    </location>
</feature>
<feature type="strand" evidence="23">
    <location>
        <begin position="413"/>
        <end position="417"/>
    </location>
</feature>
<feature type="turn" evidence="23">
    <location>
        <begin position="419"/>
        <end position="421"/>
    </location>
</feature>
<feature type="helix" evidence="23">
    <location>
        <begin position="427"/>
        <end position="429"/>
    </location>
</feature>
<feature type="strand" evidence="23">
    <location>
        <begin position="431"/>
        <end position="435"/>
    </location>
</feature>
<feature type="turn" evidence="23">
    <location>
        <begin position="436"/>
        <end position="438"/>
    </location>
</feature>
<feature type="strand" evidence="23">
    <location>
        <begin position="443"/>
        <end position="452"/>
    </location>
</feature>
<feature type="helix" evidence="23">
    <location>
        <begin position="454"/>
        <end position="468"/>
    </location>
</feature>
<feature type="helix" evidence="23">
    <location>
        <begin position="476"/>
        <end position="488"/>
    </location>
</feature>
<feature type="strand" evidence="23">
    <location>
        <begin position="496"/>
        <end position="498"/>
    </location>
</feature>
<feature type="strand" evidence="23">
    <location>
        <begin position="500"/>
        <end position="502"/>
    </location>
</feature>
<feature type="helix" evidence="23">
    <location>
        <begin position="517"/>
        <end position="520"/>
    </location>
</feature>
<feature type="turn" evidence="23">
    <location>
        <begin position="521"/>
        <end position="523"/>
    </location>
</feature>
<feature type="helix" evidence="23">
    <location>
        <begin position="524"/>
        <end position="532"/>
    </location>
</feature>
<feature type="turn" evidence="23">
    <location>
        <begin position="534"/>
        <end position="536"/>
    </location>
</feature>
<feature type="helix" evidence="23">
    <location>
        <begin position="537"/>
        <end position="540"/>
    </location>
</feature>
<feature type="turn" evidence="23">
    <location>
        <begin position="543"/>
        <end position="545"/>
    </location>
</feature>
<feature type="strand" evidence="23">
    <location>
        <begin position="546"/>
        <end position="553"/>
    </location>
</feature>
<feature type="helix" evidence="23">
    <location>
        <begin position="554"/>
        <end position="556"/>
    </location>
</feature>
<feature type="helix" evidence="23">
    <location>
        <begin position="557"/>
        <end position="561"/>
    </location>
</feature>
<feature type="helix" evidence="23">
    <location>
        <begin position="563"/>
        <end position="571"/>
    </location>
</feature>
<feature type="strand" evidence="23">
    <location>
        <begin position="578"/>
        <end position="584"/>
    </location>
</feature>
<feature type="strand" evidence="23">
    <location>
        <begin position="587"/>
        <end position="589"/>
    </location>
</feature>
<feature type="turn" evidence="23">
    <location>
        <begin position="596"/>
        <end position="599"/>
    </location>
</feature>
<feature type="turn" evidence="23">
    <location>
        <begin position="604"/>
        <end position="606"/>
    </location>
</feature>
<feature type="helix" evidence="23">
    <location>
        <begin position="607"/>
        <end position="610"/>
    </location>
</feature>
<feature type="helix" evidence="23">
    <location>
        <begin position="614"/>
        <end position="623"/>
    </location>
</feature>
<feature type="strand" evidence="23">
    <location>
        <begin position="627"/>
        <end position="629"/>
    </location>
</feature>
<feature type="strand" evidence="23">
    <location>
        <begin position="631"/>
        <end position="633"/>
    </location>
</feature>
<feature type="helix" evidence="23">
    <location>
        <begin position="635"/>
        <end position="645"/>
    </location>
</feature>
<feature type="turn" evidence="23">
    <location>
        <begin position="646"/>
        <end position="649"/>
    </location>
</feature>
<feature type="helix" evidence="23">
    <location>
        <begin position="650"/>
        <end position="664"/>
    </location>
</feature>
<feature type="helix" evidence="23">
    <location>
        <begin position="676"/>
        <end position="696"/>
    </location>
</feature>
<feature type="turn" evidence="23">
    <location>
        <begin position="697"/>
        <end position="699"/>
    </location>
</feature>
<feature type="helix" evidence="23">
    <location>
        <begin position="701"/>
        <end position="722"/>
    </location>
</feature>
<feature type="helix" evidence="23">
    <location>
        <begin position="724"/>
        <end position="727"/>
    </location>
</feature>
<feature type="helix" evidence="23">
    <location>
        <begin position="732"/>
        <end position="755"/>
    </location>
</feature>
<feature type="turn" evidence="23">
    <location>
        <begin position="756"/>
        <end position="759"/>
    </location>
</feature>
<feature type="helix" evidence="23">
    <location>
        <begin position="761"/>
        <end position="771"/>
    </location>
</feature>
<feature type="helix" evidence="23">
    <location>
        <begin position="775"/>
        <end position="778"/>
    </location>
</feature>
<feature type="helix" evidence="23">
    <location>
        <begin position="807"/>
        <end position="816"/>
    </location>
</feature>
<feature type="strand" evidence="24">
    <location>
        <begin position="817"/>
        <end position="819"/>
    </location>
</feature>
<feature type="helix" evidence="21">
    <location>
        <begin position="838"/>
        <end position="861"/>
    </location>
</feature>
<feature type="helix" evidence="21">
    <location>
        <begin position="866"/>
        <end position="887"/>
    </location>
</feature>
<feature type="strand" evidence="21">
    <location>
        <begin position="893"/>
        <end position="895"/>
    </location>
</feature>
<feature type="strand" evidence="21">
    <location>
        <begin position="897"/>
        <end position="899"/>
    </location>
</feature>
<sequence>MRLFVSDGVPGCLPVLAAAGRARGRAEVLISTVGPEDCVVPFLTRPKVPVLQLDSGNYLFSTSAICRYFFLLSGWEQDDLTNQWLEWEATELQPALSAALYYLVVQGKKGEDVLGSVRRALTHIDHSLSRQNCPFLAGETESLADIVLWGALYPLLQDPAYLPEELSALHSWFQTLSTQEPCQRAAETVLKQQGVLALRPYLQKQPQPSPAEGRAVTNEPEEEELATLSEEEIAMAVTAWEKGLESLPPLRPQQNPVLPVAGERNVLITSALPYVNNVPHLGNIIGCVLSADVFARYSRLRQWNTLYLCGTDEYGTATETKALEEGLTPQEICDKYHIIHADIYRWFNISFDIFGRTTTPQQTKITQDIFQQLLKRGFVLQDTVEQLRCEHCARFLADRFVEGVCPFCGYEEARGDQCDKCGKLINAVELKKPQCKVCRSCPVVQSSQHLFLDLPKLEKRLEEWLGRTLPGSDWTPNAQFITRSWLRDGLKPRCITRDLKWGTPVPLEGFEDKVFYVWFDATIGYLSITANYTDQWERWWKNPEQVDLYQFMAKDNVPFHSLVFPCSALGAEDNYTLVSHLIATEYLNYEDGKFSKSRGVGVFGDMAQDTGIPADIWRFYLLYIRPEGQDSAFSWTDLLLKNNSELLNNLGNFINRAGMFVSKFFGGYVPEMVLTPDDQRLLAHVTLELQHYHQLLEKVRIRDALRSILTISRHGNQYIQVNEPWKRIKGSEADRQRAGTVTGLAVNIAALLSVMLQPYMPTVSATIQAQLQLPPPACSILLTNFLCTLPAGHQIGTVSPLFQKLENDQIESLRQRFGGGQAKTSPKPAVVETVTTAKPQQIQALMDEVTKQGNIVRELKAQKADKNEVAAEVAKLLDLKKQLAVAEGKPPEAPKGKKKK</sequence>
<accession>P56192</accession>
<accession>B3KVK7</accession>
<accession>Q14895</accession>
<accession>Q53H14</accession>
<accession>Q96A15</accession>
<accession>Q96BZ0</accession>
<accession>Q9NSE0</accession>
<name>SYMC_HUMAN</name>
<evidence type="ECO:0000250" key="1"/>
<evidence type="ECO:0000250" key="2">
    <source>
        <dbReference type="UniProtKB" id="Q68FL6"/>
    </source>
</evidence>
<evidence type="ECO:0000269" key="3">
    <source>
    </source>
</evidence>
<evidence type="ECO:0000269" key="4">
    <source>
    </source>
</evidence>
<evidence type="ECO:0000269" key="5">
    <source>
    </source>
</evidence>
<evidence type="ECO:0000269" key="6">
    <source>
    </source>
</evidence>
<evidence type="ECO:0000269" key="7">
    <source>
    </source>
</evidence>
<evidence type="ECO:0000269" key="8">
    <source>
    </source>
</evidence>
<evidence type="ECO:0000269" key="9">
    <source>
    </source>
</evidence>
<evidence type="ECO:0000269" key="10">
    <source>
    </source>
</evidence>
<evidence type="ECO:0000269" key="11">
    <source>
    </source>
</evidence>
<evidence type="ECO:0000269" key="12">
    <source>
    </source>
</evidence>
<evidence type="ECO:0000269" key="13">
    <source>
    </source>
</evidence>
<evidence type="ECO:0000269" key="14">
    <source>
    </source>
</evidence>
<evidence type="ECO:0000269" key="15">
    <source ref="26"/>
</evidence>
<evidence type="ECO:0000303" key="16">
    <source>
    </source>
</evidence>
<evidence type="ECO:0000305" key="17"/>
<evidence type="ECO:0000305" key="18">
    <source>
    </source>
</evidence>
<evidence type="ECO:0000312" key="19">
    <source>
        <dbReference type="HGNC" id="HGNC:6898"/>
    </source>
</evidence>
<evidence type="ECO:0007744" key="20">
    <source>
        <dbReference type="PDB" id="4BL7"/>
    </source>
</evidence>
<evidence type="ECO:0007829" key="21">
    <source>
        <dbReference type="PDB" id="2DJV"/>
    </source>
</evidence>
<evidence type="ECO:0007829" key="22">
    <source>
        <dbReference type="PDB" id="4BVX"/>
    </source>
</evidence>
<evidence type="ECO:0007829" key="23">
    <source>
        <dbReference type="PDB" id="5GL7"/>
    </source>
</evidence>
<evidence type="ECO:0007829" key="24">
    <source>
        <dbReference type="PDB" id="5GOY"/>
    </source>
</evidence>
<proteinExistence type="evidence at protein level"/>
<dbReference type="EC" id="6.1.1.10" evidence="4"/>
<dbReference type="EMBL" id="X94754">
    <property type="protein sequence ID" value="CAA64381.1"/>
    <property type="molecule type" value="mRNA"/>
</dbReference>
<dbReference type="EMBL" id="Z49216">
    <property type="protein sequence ID" value="CAA89153.1"/>
    <property type="molecule type" value="mRNA"/>
</dbReference>
<dbReference type="EMBL" id="D84224">
    <property type="protein sequence ID" value="BAA95668.1"/>
    <property type="molecule type" value="mRNA"/>
</dbReference>
<dbReference type="EMBL" id="BT007338">
    <property type="protein sequence ID" value="AAP36002.1"/>
    <property type="molecule type" value="mRNA"/>
</dbReference>
<dbReference type="EMBL" id="AK122956">
    <property type="protein sequence ID" value="BAG53819.1"/>
    <property type="molecule type" value="mRNA"/>
</dbReference>
<dbReference type="EMBL" id="AK222767">
    <property type="protein sequence ID" value="BAD96487.1"/>
    <property type="molecule type" value="mRNA"/>
</dbReference>
<dbReference type="EMBL" id="AC022506">
    <property type="status" value="NOT_ANNOTATED_CDS"/>
    <property type="molecule type" value="Genomic_DNA"/>
</dbReference>
<dbReference type="EMBL" id="BC002384">
    <property type="protein sequence ID" value="AAH02384.1"/>
    <property type="molecule type" value="mRNA"/>
</dbReference>
<dbReference type="EMBL" id="BC006328">
    <property type="protein sequence ID" value="AAH06328.1"/>
    <property type="molecule type" value="mRNA"/>
</dbReference>
<dbReference type="EMBL" id="BC011639">
    <property type="protein sequence ID" value="AAH11639.1"/>
    <property type="molecule type" value="mRNA"/>
</dbReference>
<dbReference type="EMBL" id="BC011849">
    <property type="protein sequence ID" value="AAH11849.1"/>
    <property type="molecule type" value="mRNA"/>
</dbReference>
<dbReference type="EMBL" id="BC015011">
    <property type="protein sequence ID" value="AAH15011.1"/>
    <property type="molecule type" value="mRNA"/>
</dbReference>
<dbReference type="CCDS" id="CCDS8942.1">
    <molecule id="P56192-1"/>
</dbReference>
<dbReference type="PIR" id="JC5224">
    <property type="entry name" value="JC5224"/>
</dbReference>
<dbReference type="RefSeq" id="NP_004981.2">
    <molecule id="P56192-1"/>
    <property type="nucleotide sequence ID" value="NM_004990.3"/>
</dbReference>
<dbReference type="RefSeq" id="XP_047284808.1">
    <molecule id="P56192-2"/>
    <property type="nucleotide sequence ID" value="XM_047428852.1"/>
</dbReference>
<dbReference type="RefSeq" id="XP_054228033.1">
    <molecule id="P56192-2"/>
    <property type="nucleotide sequence ID" value="XM_054372058.1"/>
</dbReference>
<dbReference type="PDB" id="2DJV">
    <property type="method" value="NMR"/>
    <property type="chains" value="A=835-900"/>
</dbReference>
<dbReference type="PDB" id="4BL7">
    <property type="method" value="X-ray"/>
    <property type="resolution" value="1.89 A"/>
    <property type="chains" value="A=1-224"/>
</dbReference>
<dbReference type="PDB" id="4BVX">
    <property type="method" value="X-ray"/>
    <property type="resolution" value="1.60 A"/>
    <property type="chains" value="A=1-207"/>
</dbReference>
<dbReference type="PDB" id="4BVY">
    <property type="method" value="X-ray"/>
    <property type="resolution" value="1.99 A"/>
    <property type="chains" value="A=1-225"/>
</dbReference>
<dbReference type="PDB" id="5GL7">
    <property type="method" value="X-ray"/>
    <property type="resolution" value="2.01 A"/>
    <property type="chains" value="A=221-834"/>
</dbReference>
<dbReference type="PDB" id="5GOY">
    <property type="method" value="X-ray"/>
    <property type="resolution" value="2.28 A"/>
    <property type="chains" value="A=221-834"/>
</dbReference>
<dbReference type="PDB" id="5Y6L">
    <property type="method" value="X-ray"/>
    <property type="resolution" value="2.90 A"/>
    <property type="chains" value="A=1-224"/>
</dbReference>
<dbReference type="PDBsum" id="2DJV"/>
<dbReference type="PDBsum" id="4BL7"/>
<dbReference type="PDBsum" id="4BVX"/>
<dbReference type="PDBsum" id="4BVY"/>
<dbReference type="PDBsum" id="5GL7"/>
<dbReference type="PDBsum" id="5GOY"/>
<dbReference type="PDBsum" id="5Y6L"/>
<dbReference type="BMRB" id="P56192"/>
<dbReference type="SMR" id="P56192"/>
<dbReference type="BioGRID" id="110311">
    <property type="interactions" value="353"/>
</dbReference>
<dbReference type="ComplexPortal" id="CPX-2469">
    <property type="entry name" value="Multiaminoacyl-tRNA synthetase complex"/>
</dbReference>
<dbReference type="CORUM" id="P56192"/>
<dbReference type="DIP" id="DIP-38164N"/>
<dbReference type="FunCoup" id="P56192">
    <property type="interactions" value="2520"/>
</dbReference>
<dbReference type="IntAct" id="P56192">
    <property type="interactions" value="92"/>
</dbReference>
<dbReference type="MINT" id="P56192"/>
<dbReference type="STRING" id="9606.ENSP00000262027"/>
<dbReference type="BindingDB" id="P56192"/>
<dbReference type="ChEMBL" id="CHEMBL2870"/>
<dbReference type="DrugBank" id="DB00134">
    <property type="generic name" value="Methionine"/>
</dbReference>
<dbReference type="MoonProt" id="P56192"/>
<dbReference type="CarbonylDB" id="P56192"/>
<dbReference type="GlyGen" id="P56192">
    <property type="glycosylation" value="1 site, 1 O-linked glycan (1 site)"/>
</dbReference>
<dbReference type="iPTMnet" id="P56192"/>
<dbReference type="MetOSite" id="P56192"/>
<dbReference type="PhosphoSitePlus" id="P56192"/>
<dbReference type="SwissPalm" id="P56192"/>
<dbReference type="BioMuta" id="MARS"/>
<dbReference type="DMDM" id="20178332"/>
<dbReference type="CPTAC" id="CPTAC-538"/>
<dbReference type="CPTAC" id="CPTAC-539"/>
<dbReference type="jPOST" id="P56192"/>
<dbReference type="MassIVE" id="P56192"/>
<dbReference type="PaxDb" id="9606-ENSP00000262027"/>
<dbReference type="PeptideAtlas" id="P56192"/>
<dbReference type="ProteomicsDB" id="3760"/>
<dbReference type="ProteomicsDB" id="56902">
    <molecule id="P56192-1"/>
</dbReference>
<dbReference type="Pumba" id="P56192"/>
<dbReference type="ABCD" id="P56192">
    <property type="antibodies" value="1 sequenced antibody"/>
</dbReference>
<dbReference type="Antibodypedia" id="1110">
    <property type="antibodies" value="179 antibodies from 30 providers"/>
</dbReference>
<dbReference type="DNASU" id="4141"/>
<dbReference type="Ensembl" id="ENST00000262027.10">
    <molecule id="P56192-1"/>
    <property type="protein sequence ID" value="ENSP00000262027.5"/>
    <property type="gene ID" value="ENSG00000166986.15"/>
</dbReference>
<dbReference type="Ensembl" id="ENST00000537638.6">
    <molecule id="P56192-2"/>
    <property type="protein sequence ID" value="ENSP00000446168.2"/>
    <property type="gene ID" value="ENSG00000166986.15"/>
</dbReference>
<dbReference type="GeneID" id="4141"/>
<dbReference type="KEGG" id="hsa:4141"/>
<dbReference type="MANE-Select" id="ENST00000262027.10">
    <property type="protein sequence ID" value="ENSP00000262027.5"/>
    <property type="RefSeq nucleotide sequence ID" value="NM_004990.4"/>
    <property type="RefSeq protein sequence ID" value="NP_004981.2"/>
</dbReference>
<dbReference type="UCSC" id="uc001sof.2">
    <molecule id="P56192-1"/>
    <property type="organism name" value="human"/>
</dbReference>
<dbReference type="AGR" id="HGNC:6898"/>
<dbReference type="CTD" id="4141"/>
<dbReference type="DisGeNET" id="4141"/>
<dbReference type="GeneCards" id="MARS1"/>
<dbReference type="GeneReviews" id="MARS1"/>
<dbReference type="HGNC" id="HGNC:6898">
    <property type="gene designation" value="MARS1"/>
</dbReference>
<dbReference type="HPA" id="ENSG00000166986">
    <property type="expression patterns" value="Low tissue specificity"/>
</dbReference>
<dbReference type="MalaCards" id="MARS1"/>
<dbReference type="MIM" id="156560">
    <property type="type" value="gene"/>
</dbReference>
<dbReference type="MIM" id="615486">
    <property type="type" value="phenotype"/>
</dbReference>
<dbReference type="MIM" id="616280">
    <property type="type" value="phenotype"/>
</dbReference>
<dbReference type="MIM" id="619692">
    <property type="type" value="phenotype"/>
</dbReference>
<dbReference type="MIM" id="620323">
    <property type="type" value="phenotype"/>
</dbReference>
<dbReference type="neXtProt" id="NX_P56192"/>
<dbReference type="OpenTargets" id="ENSG00000166986"/>
<dbReference type="Orphanet" id="397735">
    <property type="disease" value="Autosomal dominant Charcot-Marie-Tooth disease type 2U"/>
</dbReference>
<dbReference type="Orphanet" id="401835">
    <property type="disease" value="Autosomal recessive spastic paraplegia type 70"/>
</dbReference>
<dbReference type="Orphanet" id="440427">
    <property type="disease" value="Severe early-onset pulmonary alveolar proteinosis due to MARS deficiency"/>
</dbReference>
<dbReference type="PharmGKB" id="PA30642"/>
<dbReference type="VEuPathDB" id="HostDB:ENSG00000166986"/>
<dbReference type="eggNOG" id="KOG0867">
    <property type="taxonomic scope" value="Eukaryota"/>
</dbReference>
<dbReference type="eggNOG" id="KOG1247">
    <property type="taxonomic scope" value="Eukaryota"/>
</dbReference>
<dbReference type="GeneTree" id="ENSGT00550000075017"/>
<dbReference type="HOGENOM" id="CLU_009710_3_2_1"/>
<dbReference type="InParanoid" id="P56192"/>
<dbReference type="OMA" id="HLNTTEY"/>
<dbReference type="OrthoDB" id="5844513at2759"/>
<dbReference type="PAN-GO" id="P56192">
    <property type="GO annotations" value="4 GO annotations based on evolutionary models"/>
</dbReference>
<dbReference type="PhylomeDB" id="P56192"/>
<dbReference type="TreeFam" id="TF300526"/>
<dbReference type="BRENDA" id="6.1.1.10">
    <property type="organism ID" value="2681"/>
</dbReference>
<dbReference type="PathwayCommons" id="P56192"/>
<dbReference type="Reactome" id="R-HSA-2408522">
    <property type="pathway name" value="Selenoamino acid metabolism"/>
</dbReference>
<dbReference type="Reactome" id="R-HSA-379716">
    <property type="pathway name" value="Cytosolic tRNA aminoacylation"/>
</dbReference>
<dbReference type="Reactome" id="R-HSA-9856649">
    <property type="pathway name" value="Transcriptional and post-translational regulation of MITF-M expression and activity"/>
</dbReference>
<dbReference type="SignaLink" id="P56192"/>
<dbReference type="SIGNOR" id="P56192"/>
<dbReference type="BioGRID-ORCS" id="4141">
    <property type="hits" value="827 hits in 1160 CRISPR screens"/>
</dbReference>
<dbReference type="CD-CODE" id="91857CE7">
    <property type="entry name" value="Nucleolus"/>
</dbReference>
<dbReference type="CD-CODE" id="DEE660B4">
    <property type="entry name" value="Stress granule"/>
</dbReference>
<dbReference type="CD-CODE" id="FB4E32DD">
    <property type="entry name" value="Presynaptic clusters and postsynaptic densities"/>
</dbReference>
<dbReference type="ChiTaRS" id="MARS">
    <property type="organism name" value="human"/>
</dbReference>
<dbReference type="EvolutionaryTrace" id="P56192"/>
<dbReference type="GeneWiki" id="MARS_(gene)"/>
<dbReference type="GenomeRNAi" id="4141"/>
<dbReference type="Pharos" id="P56192">
    <property type="development level" value="Tchem"/>
</dbReference>
<dbReference type="PRO" id="PR:P56192"/>
<dbReference type="Proteomes" id="UP000005640">
    <property type="component" value="Chromosome 12"/>
</dbReference>
<dbReference type="RNAct" id="P56192">
    <property type="molecule type" value="protein"/>
</dbReference>
<dbReference type="Bgee" id="ENSG00000166986">
    <property type="expression patterns" value="Expressed in right hemisphere of cerebellum and 206 other cell types or tissues"/>
</dbReference>
<dbReference type="ExpressionAtlas" id="P56192">
    <property type="expression patterns" value="baseline and differential"/>
</dbReference>
<dbReference type="GO" id="GO:0017101">
    <property type="term" value="C:aminoacyl-tRNA synthetase multienzyme complex"/>
    <property type="evidence" value="ECO:0000314"/>
    <property type="project" value="UniProtKB"/>
</dbReference>
<dbReference type="GO" id="GO:0005737">
    <property type="term" value="C:cytoplasm"/>
    <property type="evidence" value="ECO:0000314"/>
    <property type="project" value="CAFA"/>
</dbReference>
<dbReference type="GO" id="GO:0005829">
    <property type="term" value="C:cytosol"/>
    <property type="evidence" value="ECO:0000314"/>
    <property type="project" value="HPA"/>
</dbReference>
<dbReference type="GO" id="GO:0070062">
    <property type="term" value="C:extracellular exosome"/>
    <property type="evidence" value="ECO:0007005"/>
    <property type="project" value="UniProtKB"/>
</dbReference>
<dbReference type="GO" id="GO:0016020">
    <property type="term" value="C:membrane"/>
    <property type="evidence" value="ECO:0007005"/>
    <property type="project" value="UniProtKB"/>
</dbReference>
<dbReference type="GO" id="GO:0005730">
    <property type="term" value="C:nucleolus"/>
    <property type="evidence" value="ECO:0000314"/>
    <property type="project" value="CAFA"/>
</dbReference>
<dbReference type="GO" id="GO:0005524">
    <property type="term" value="F:ATP binding"/>
    <property type="evidence" value="ECO:0007669"/>
    <property type="project" value="UniProtKB-KW"/>
</dbReference>
<dbReference type="GO" id="GO:0004825">
    <property type="term" value="F:methionine-tRNA ligase activity"/>
    <property type="evidence" value="ECO:0000314"/>
    <property type="project" value="UniProtKB"/>
</dbReference>
<dbReference type="GO" id="GO:0000049">
    <property type="term" value="F:tRNA binding"/>
    <property type="evidence" value="ECO:0007669"/>
    <property type="project" value="UniProtKB-KW"/>
</dbReference>
<dbReference type="GO" id="GO:0071364">
    <property type="term" value="P:cellular response to epidermal growth factor stimulus"/>
    <property type="evidence" value="ECO:0000314"/>
    <property type="project" value="CAFA"/>
</dbReference>
<dbReference type="GO" id="GO:0036120">
    <property type="term" value="P:cellular response to platelet-derived growth factor stimulus"/>
    <property type="evidence" value="ECO:0000314"/>
    <property type="project" value="CAFA"/>
</dbReference>
<dbReference type="GO" id="GO:0006431">
    <property type="term" value="P:methionyl-tRNA aminoacylation"/>
    <property type="evidence" value="ECO:0000314"/>
    <property type="project" value="UniProtKB"/>
</dbReference>
<dbReference type="GO" id="GO:1901838">
    <property type="term" value="P:positive regulation of transcription of nucleolar large rRNA by RNA polymerase I"/>
    <property type="evidence" value="ECO:0000315"/>
    <property type="project" value="CAFA"/>
</dbReference>
<dbReference type="GO" id="GO:0009303">
    <property type="term" value="P:rRNA transcription"/>
    <property type="evidence" value="ECO:0000315"/>
    <property type="project" value="CAFA"/>
</dbReference>
<dbReference type="GO" id="GO:0006418">
    <property type="term" value="P:tRNA aminoacylation for protein translation"/>
    <property type="evidence" value="ECO:0000304"/>
    <property type="project" value="Reactome"/>
</dbReference>
<dbReference type="CDD" id="cd07957">
    <property type="entry name" value="Anticodon_Ia_Met"/>
    <property type="match status" value="1"/>
</dbReference>
<dbReference type="CDD" id="cd10307">
    <property type="entry name" value="GST_C_MetRS_N"/>
    <property type="match status" value="1"/>
</dbReference>
<dbReference type="CDD" id="cd00814">
    <property type="entry name" value="MetRS_core"/>
    <property type="match status" value="1"/>
</dbReference>
<dbReference type="CDD" id="cd00939">
    <property type="entry name" value="MetRS_RNA"/>
    <property type="match status" value="1"/>
</dbReference>
<dbReference type="FunFam" id="2.20.28.20:FF:000001">
    <property type="entry name" value="Methionine--tRNA ligase"/>
    <property type="match status" value="1"/>
</dbReference>
<dbReference type="FunFam" id="1.10.287.10:FF:000009">
    <property type="entry name" value="Methionine--tRNA ligase, cytoplasmic"/>
    <property type="match status" value="1"/>
</dbReference>
<dbReference type="FunFam" id="1.20.1050.10:FF:000026">
    <property type="entry name" value="Methionine--tRNA ligase, cytoplasmic"/>
    <property type="match status" value="1"/>
</dbReference>
<dbReference type="FunFam" id="1.10.730.10:FF:000010">
    <property type="entry name" value="methionine--tRNA ligase, cytoplasmic"/>
    <property type="match status" value="1"/>
</dbReference>
<dbReference type="FunFam" id="3.40.30.10:FF:000136">
    <property type="entry name" value="methionine--tRNA ligase, cytoplasmic"/>
    <property type="match status" value="1"/>
</dbReference>
<dbReference type="Gene3D" id="1.20.1050.10">
    <property type="match status" value="1"/>
</dbReference>
<dbReference type="Gene3D" id="3.40.30.10">
    <property type="entry name" value="Glutaredoxin"/>
    <property type="match status" value="1"/>
</dbReference>
<dbReference type="Gene3D" id="3.40.50.620">
    <property type="entry name" value="HUPs"/>
    <property type="match status" value="1"/>
</dbReference>
<dbReference type="Gene3D" id="1.10.730.10">
    <property type="entry name" value="Isoleucyl-tRNA Synthetase, Domain 1"/>
    <property type="match status" value="1"/>
</dbReference>
<dbReference type="Gene3D" id="2.20.28.20">
    <property type="entry name" value="Methionyl-tRNA synthetase, Zn-domain"/>
    <property type="match status" value="1"/>
</dbReference>
<dbReference type="Gene3D" id="1.10.287.10">
    <property type="entry name" value="S15/NS1, RNA-binding"/>
    <property type="match status" value="1"/>
</dbReference>
<dbReference type="HAMAP" id="MF_00098">
    <property type="entry name" value="Met_tRNA_synth_type1"/>
    <property type="match status" value="1"/>
</dbReference>
<dbReference type="InterPro" id="IPR001412">
    <property type="entry name" value="aa-tRNA-synth_I_CS"/>
</dbReference>
<dbReference type="InterPro" id="IPR041872">
    <property type="entry name" value="Anticodon_Met"/>
</dbReference>
<dbReference type="InterPro" id="IPR010987">
    <property type="entry name" value="Glutathione-S-Trfase_C-like"/>
</dbReference>
<dbReference type="InterPro" id="IPR036282">
    <property type="entry name" value="Glutathione-S-Trfase_C_sf"/>
</dbReference>
<dbReference type="InterPro" id="IPR004046">
    <property type="entry name" value="GST_C"/>
</dbReference>
<dbReference type="InterPro" id="IPR041598">
    <property type="entry name" value="MARS_N"/>
</dbReference>
<dbReference type="InterPro" id="IPR023458">
    <property type="entry name" value="Met-tRNA_ligase_1"/>
</dbReference>
<dbReference type="InterPro" id="IPR014758">
    <property type="entry name" value="Met-tRNA_synth"/>
</dbReference>
<dbReference type="InterPro" id="IPR015413">
    <property type="entry name" value="Methionyl/Leucyl_tRNA_Synth"/>
</dbReference>
<dbReference type="InterPro" id="IPR033911">
    <property type="entry name" value="MetRS_core"/>
</dbReference>
<dbReference type="InterPro" id="IPR029038">
    <property type="entry name" value="MetRS_Zn"/>
</dbReference>
<dbReference type="InterPro" id="IPR014729">
    <property type="entry name" value="Rossmann-like_a/b/a_fold"/>
</dbReference>
<dbReference type="InterPro" id="IPR009080">
    <property type="entry name" value="tRNAsynth_Ia_anticodon-bd"/>
</dbReference>
<dbReference type="InterPro" id="IPR009068">
    <property type="entry name" value="uS15_NS1_RNA-bd_sf"/>
</dbReference>
<dbReference type="InterPro" id="IPR000738">
    <property type="entry name" value="WHEP-TRS_dom"/>
</dbReference>
<dbReference type="NCBIfam" id="TIGR00398">
    <property type="entry name" value="metG"/>
    <property type="match status" value="1"/>
</dbReference>
<dbReference type="NCBIfam" id="NF001100">
    <property type="entry name" value="PRK00133.1"/>
    <property type="match status" value="1"/>
</dbReference>
<dbReference type="PANTHER" id="PTHR45765">
    <property type="entry name" value="METHIONINE--TRNA LIGASE"/>
    <property type="match status" value="1"/>
</dbReference>
<dbReference type="PANTHER" id="PTHR45765:SF1">
    <property type="entry name" value="METHIONINE--TRNA LIGASE, CYTOPLASMIC"/>
    <property type="match status" value="1"/>
</dbReference>
<dbReference type="Pfam" id="PF19303">
    <property type="entry name" value="Anticodon_3"/>
    <property type="match status" value="1"/>
</dbReference>
<dbReference type="Pfam" id="PF00043">
    <property type="entry name" value="GST_C"/>
    <property type="match status" value="1"/>
</dbReference>
<dbReference type="Pfam" id="PF18485">
    <property type="entry name" value="GST_N_5"/>
    <property type="match status" value="1"/>
</dbReference>
<dbReference type="Pfam" id="PF09334">
    <property type="entry name" value="tRNA-synt_1g"/>
    <property type="match status" value="1"/>
</dbReference>
<dbReference type="Pfam" id="PF00458">
    <property type="entry name" value="WHEP-TRS"/>
    <property type="match status" value="1"/>
</dbReference>
<dbReference type="PRINTS" id="PR01041">
    <property type="entry name" value="TRNASYNTHMET"/>
</dbReference>
<dbReference type="SMART" id="SM00991">
    <property type="entry name" value="WHEP-TRS"/>
    <property type="match status" value="1"/>
</dbReference>
<dbReference type="SUPFAM" id="SSF47323">
    <property type="entry name" value="Anticodon-binding domain of a subclass of class I aminoacyl-tRNA synthetases"/>
    <property type="match status" value="1"/>
</dbReference>
<dbReference type="SUPFAM" id="SSF47616">
    <property type="entry name" value="GST C-terminal domain-like"/>
    <property type="match status" value="1"/>
</dbReference>
<dbReference type="SUPFAM" id="SSF57770">
    <property type="entry name" value="Methionyl-tRNA synthetase (MetRS), Zn-domain"/>
    <property type="match status" value="1"/>
</dbReference>
<dbReference type="SUPFAM" id="SSF52374">
    <property type="entry name" value="Nucleotidylyl transferase"/>
    <property type="match status" value="1"/>
</dbReference>
<dbReference type="SUPFAM" id="SSF47060">
    <property type="entry name" value="S15/NS1 RNA-binding domain"/>
    <property type="match status" value="1"/>
</dbReference>
<dbReference type="PROSITE" id="PS00178">
    <property type="entry name" value="AA_TRNA_LIGASE_I"/>
    <property type="match status" value="1"/>
</dbReference>
<dbReference type="PROSITE" id="PS50405">
    <property type="entry name" value="GST_CTER"/>
    <property type="match status" value="1"/>
</dbReference>
<dbReference type="PROSITE" id="PS00762">
    <property type="entry name" value="WHEP_TRS_1"/>
    <property type="match status" value="1"/>
</dbReference>
<dbReference type="PROSITE" id="PS51185">
    <property type="entry name" value="WHEP_TRS_2"/>
    <property type="match status" value="1"/>
</dbReference>
<keyword id="KW-0002">3D-structure</keyword>
<keyword id="KW-0025">Alternative splicing</keyword>
<keyword id="KW-0030">Aminoacyl-tRNA synthetase</keyword>
<keyword id="KW-0067">ATP-binding</keyword>
<keyword id="KW-0144">Charcot-Marie-Tooth disease</keyword>
<keyword id="KW-0963">Cytoplasm</keyword>
<keyword id="KW-0225">Disease variant</keyword>
<keyword id="KW-0890">Hereditary spastic paraplegia</keyword>
<keyword id="KW-0436">Ligase</keyword>
<keyword id="KW-0523">Neurodegeneration</keyword>
<keyword id="KW-0622">Neuropathy</keyword>
<keyword id="KW-0547">Nucleotide-binding</keyword>
<keyword id="KW-0539">Nucleus</keyword>
<keyword id="KW-0597">Phosphoprotein</keyword>
<keyword id="KW-0648">Protein biosynthesis</keyword>
<keyword id="KW-1267">Proteomics identification</keyword>
<keyword id="KW-1185">Reference proteome</keyword>
<keyword id="KW-0694">RNA-binding</keyword>
<keyword id="KW-0820">tRNA-binding</keyword>
<organism>
    <name type="scientific">Homo sapiens</name>
    <name type="common">Human</name>
    <dbReference type="NCBI Taxonomy" id="9606"/>
    <lineage>
        <taxon>Eukaryota</taxon>
        <taxon>Metazoa</taxon>
        <taxon>Chordata</taxon>
        <taxon>Craniata</taxon>
        <taxon>Vertebrata</taxon>
        <taxon>Euteleostomi</taxon>
        <taxon>Mammalia</taxon>
        <taxon>Eutheria</taxon>
        <taxon>Euarchontoglires</taxon>
        <taxon>Primates</taxon>
        <taxon>Haplorrhini</taxon>
        <taxon>Catarrhini</taxon>
        <taxon>Hominidae</taxon>
        <taxon>Homo</taxon>
    </lineage>
</organism>
<comment type="function">
    <text evidence="3 4 13">Catalyzes the specific attachment of an amino acid to its cognate tRNA in a 2 step reaction: the amino acid (AA) is first activated by ATP to form AA-AMP and then transferred to the acceptor end of the tRNA (PubMed:11714285). Plays a role in the synthesis of ribosomal RNA in the nucleolus (PubMed:10791971).</text>
</comment>
<comment type="catalytic activity">
    <reaction evidence="4">
        <text>tRNA(Met) + L-methionine + ATP = L-methionyl-tRNA(Met) + AMP + diphosphate</text>
        <dbReference type="Rhea" id="RHEA:13481"/>
        <dbReference type="Rhea" id="RHEA-COMP:9667"/>
        <dbReference type="Rhea" id="RHEA-COMP:9698"/>
        <dbReference type="ChEBI" id="CHEBI:30616"/>
        <dbReference type="ChEBI" id="CHEBI:33019"/>
        <dbReference type="ChEBI" id="CHEBI:57844"/>
        <dbReference type="ChEBI" id="CHEBI:78442"/>
        <dbReference type="ChEBI" id="CHEBI:78530"/>
        <dbReference type="ChEBI" id="CHEBI:456215"/>
        <dbReference type="EC" id="6.1.1.10"/>
    </reaction>
</comment>
<comment type="activity regulation">
    <text evidence="4">Enzyme activity is increased by spermidine, EEF1A1, and when the Mg(2+) concentration is increased from 5 mM to 13 mM (in vitro), possibly by promoting the dissociation of the complex between the enzyme and its product.</text>
</comment>
<comment type="subunit">
    <text evidence="4 5 6 12 15">Monomer (PubMed:11714285). Part of a multisubunit complex that groups tRNA ligases for Arg (RARS1), Asp (DARS1), Gln (QARS1), Ile (IARS1), Leu (LARS1), Lys (KARS1), Met (MARS1) the bifunctional ligase for Glu and Pro (EPRS1) and the auxiliary subunits AIMP1/p43, AIMP2/p38 and EEF1E1/p18 (PubMed:19131329, PubMed:19289464, PubMed:26472928, Ref.26). Forms a linear complex that contains MARS1, EEF1E1, EPRS1 and AIMP2 that is at the core of the multisubunit complex (PubMed:26472928).</text>
</comment>
<comment type="subcellular location">
    <subcellularLocation>
        <location evidence="3 6 18">Cytoplasm</location>
        <location evidence="3 6 18">Cytosol</location>
    </subcellularLocation>
    <subcellularLocation>
        <location evidence="3">Nucleus</location>
        <location evidence="3">Nucleolus</location>
    </subcellularLocation>
    <text evidence="3">Localizes to the nucleolus in proliferative cells but disappears in quiescent cells.</text>
</comment>
<comment type="alternative products">
    <event type="alternative splicing"/>
    <isoform>
        <id>P56192-1</id>
        <name>1</name>
        <sequence type="displayed"/>
    </isoform>
    <isoform>
        <id>P56192-2</id>
        <name>2</name>
        <sequence type="described" ref="VSP_056563 VSP_056564"/>
    </isoform>
</comment>
<comment type="disease" evidence="8 11">
    <disease id="DI-03921">
        <name>Interstitial lung and liver disease</name>
        <acronym>ILLD</acronym>
        <description>An autosomal recessive, life-threatening disorder characterized by respiratory insufficiency and progressive liver disease with onset in infancy or early childhood. Clinical features include failure to thrive, hypotonia, intermittent lactic acidosis, aminoaciduria, hypothyroidism, interstitial lung disease, pulmonary alveolar proteinosis, anemia, and liver canalicular cholestasis, steatosis, and iron deposition.</description>
        <dbReference type="MIM" id="615486"/>
    </disease>
    <text>The disease is caused by variants affecting the gene represented in this entry.</text>
</comment>
<comment type="disease" evidence="7 9">
    <disease id="DI-04362">
        <name>Charcot-Marie-Tooth disease, axonal, type 2U</name>
        <acronym>CMT2U</acronym>
        <description>An axonal form of Charcot-Marie-Tooth disease, a disorder of the peripheral nervous system, characterized by progressive weakness and atrophy, initially of the peroneal muscles and later of the distal muscles of the arms. Charcot-Marie-Tooth disease is classified in two main groups on the basis of electrophysiologic properties and histopathology: primary peripheral demyelinating neuropathies (designated CMT1 when they are dominantly inherited) and primary peripheral axonal neuropathies (CMT2). Neuropathies of the CMT2 group are characterized by signs of axonal degeneration in the absence of obvious myelin alterations, normal or slightly reduced nerve conduction velocities, and progressive distal muscle weakness and atrophy. CMT2U is a slowly progressive, autosomal dominant form characterized by late-adult onset.</description>
        <dbReference type="MIM" id="616280"/>
    </disease>
    <text>The disease is caused by variants affecting the gene represented in this entry.</text>
</comment>
<comment type="disease" evidence="13">
    <disease id="DI-06300">
        <name>Trichothiodystrophy 9, non-photosensitive</name>
        <acronym>TTD9</acronym>
        <description>A form of trichothiodystrophy, a disease characterized by sulfur-deficient brittle hair and multisystem variable abnormalities. The spectrum of clinical features varies from mild disease with only hair involvement to severe disease with cutaneous, neurologic and profound developmental defects. Ichthyosis, intellectual and developmental disabilities, decreased fertility, abnormal characteristics at birth, ocular abnormalities, short stature, and infections are common manifestations. There are both photosensitive and non-photosensitive forms of the disorder. TTD9 is an autosomal recessive, non-photosensitive form characterized by brittle hair and nails, scaly skin, accompanied by failure to thrive, microcephaly, and neuromotor developmental delay.</description>
        <dbReference type="MIM" id="619692"/>
    </disease>
    <text>The disease may be caused by variants affecting the gene represented in this entry.</text>
</comment>
<comment type="disease" evidence="14">
    <disease id="DI-06655">
        <name>Spastic paraplegia 70, autosomal recessive</name>
        <acronym>SPG70</acronym>
        <description>A form of spastic paraplegia, a neurodegenerative disorder characterized by a slow, gradual, progressive weakness and spasticity of the lower limbs. Rate of progression and the severity of symptoms are quite variable. Initial symptoms may include difficulty with balance, weakness and stiffness in the legs, muscle spasms, and dragging the toes when walking. In some forms of the disorder, bladder symptoms (such as incontinence) may appear, or the weakness and stiffness may spread to other parts of the body. SPG70 features may also include global developmental delay with variably impaired intellectual development, speech delay, feeding difficulties, and dysmorphic facial features. SPG70 is characterized by onset of symptoms in infancy.</description>
        <dbReference type="MIM" id="620323"/>
    </disease>
    <text>The disease may be caused by variants affecting the gene represented in this entry.</text>
</comment>
<comment type="similarity">
    <text evidence="17">Belongs to the class-I aminoacyl-tRNA synthetase family.</text>
</comment>